<dbReference type="EMBL" id="CP000026">
    <property type="protein sequence ID" value="AAV77436.1"/>
    <property type="molecule type" value="Genomic_DNA"/>
</dbReference>
<dbReference type="RefSeq" id="WP_000954980.1">
    <property type="nucleotide sequence ID" value="NC_006511.1"/>
</dbReference>
<dbReference type="SMR" id="Q5PH87"/>
<dbReference type="KEGG" id="spt:SPA1503"/>
<dbReference type="HOGENOM" id="CLU_013016_0_3_6"/>
<dbReference type="Proteomes" id="UP000008185">
    <property type="component" value="Chromosome"/>
</dbReference>
<dbReference type="GO" id="GO:0005886">
    <property type="term" value="C:plasma membrane"/>
    <property type="evidence" value="ECO:0007669"/>
    <property type="project" value="UniProtKB-SubCell"/>
</dbReference>
<dbReference type="GO" id="GO:0090482">
    <property type="term" value="F:vitamin transmembrane transporter activity"/>
    <property type="evidence" value="ECO:0007669"/>
    <property type="project" value="UniProtKB-UniRule"/>
</dbReference>
<dbReference type="GO" id="GO:0015889">
    <property type="term" value="P:cobalamin transport"/>
    <property type="evidence" value="ECO:0007669"/>
    <property type="project" value="UniProtKB-UniRule"/>
</dbReference>
<dbReference type="CDD" id="cd06550">
    <property type="entry name" value="TM_ABC_iron-siderophores_like"/>
    <property type="match status" value="1"/>
</dbReference>
<dbReference type="FunFam" id="1.10.3470.10:FF:000001">
    <property type="entry name" value="Vitamin B12 ABC transporter permease BtuC"/>
    <property type="match status" value="1"/>
</dbReference>
<dbReference type="Gene3D" id="1.10.3470.10">
    <property type="entry name" value="ABC transporter involved in vitamin B12 uptake, BtuC"/>
    <property type="match status" value="1"/>
</dbReference>
<dbReference type="HAMAP" id="MF_01004">
    <property type="entry name" value="BtuC"/>
    <property type="match status" value="1"/>
</dbReference>
<dbReference type="InterPro" id="IPR037294">
    <property type="entry name" value="ABC_BtuC-like"/>
</dbReference>
<dbReference type="InterPro" id="IPR023691">
    <property type="entry name" value="ABC_transptr_BtuC"/>
</dbReference>
<dbReference type="InterPro" id="IPR000522">
    <property type="entry name" value="ABC_transptr_permease_BtuC"/>
</dbReference>
<dbReference type="NCBIfam" id="NF003001">
    <property type="entry name" value="PRK03784.1"/>
    <property type="match status" value="1"/>
</dbReference>
<dbReference type="PANTHER" id="PTHR30472">
    <property type="entry name" value="FERRIC ENTEROBACTIN TRANSPORT SYSTEM PERMEASE PROTEIN"/>
    <property type="match status" value="1"/>
</dbReference>
<dbReference type="PANTHER" id="PTHR30472:SF29">
    <property type="entry name" value="VITAMIN B12 IMPORT SYSTEM PERMEASE PROTEIN BTUC"/>
    <property type="match status" value="1"/>
</dbReference>
<dbReference type="Pfam" id="PF01032">
    <property type="entry name" value="FecCD"/>
    <property type="match status" value="1"/>
</dbReference>
<dbReference type="SUPFAM" id="SSF81345">
    <property type="entry name" value="ABC transporter involved in vitamin B12 uptake, BtuC"/>
    <property type="match status" value="1"/>
</dbReference>
<gene>
    <name evidence="1" type="primary">btuC</name>
    <name type="ordered locus">SPA1503</name>
</gene>
<keyword id="KW-0997">Cell inner membrane</keyword>
<keyword id="KW-1003">Cell membrane</keyword>
<keyword id="KW-0472">Membrane</keyword>
<keyword id="KW-0812">Transmembrane</keyword>
<keyword id="KW-1133">Transmembrane helix</keyword>
<keyword id="KW-0813">Transport</keyword>
<name>BTUC_SALPA</name>
<protein>
    <recommendedName>
        <fullName evidence="1">Vitamin B12 import system permease protein BtuC</fullName>
    </recommendedName>
</protein>
<comment type="function">
    <text evidence="1">Part of the ABC transporter complex BtuCDF involved in vitamin B12 import. Involved in the translocation of the substrate across the membrane.</text>
</comment>
<comment type="subunit">
    <text evidence="1">The complex is composed of two ATP-binding proteins (BtuD), two transmembrane proteins (BtuC) and a solute-binding protein (BtuF).</text>
</comment>
<comment type="subcellular location">
    <subcellularLocation>
        <location evidence="1">Cell inner membrane</location>
        <topology evidence="1">Multi-pass membrane protein</topology>
    </subcellularLocation>
</comment>
<comment type="similarity">
    <text evidence="1">Belongs to the binding-protein-dependent transport system permease family. FecCD subfamily.</text>
</comment>
<organism>
    <name type="scientific">Salmonella paratyphi A (strain ATCC 9150 / SARB42)</name>
    <dbReference type="NCBI Taxonomy" id="295319"/>
    <lineage>
        <taxon>Bacteria</taxon>
        <taxon>Pseudomonadati</taxon>
        <taxon>Pseudomonadota</taxon>
        <taxon>Gammaproteobacteria</taxon>
        <taxon>Enterobacterales</taxon>
        <taxon>Enterobacteriaceae</taxon>
        <taxon>Salmonella</taxon>
    </lineage>
</organism>
<evidence type="ECO:0000255" key="1">
    <source>
        <dbReference type="HAMAP-Rule" id="MF_01004"/>
    </source>
</evidence>
<feature type="chain" id="PRO_0000059975" description="Vitamin B12 import system permease protein BtuC">
    <location>
        <begin position="1"/>
        <end position="326"/>
    </location>
</feature>
<feature type="transmembrane region" description="Helical" evidence="1">
    <location>
        <begin position="17"/>
        <end position="39"/>
    </location>
</feature>
<feature type="transmembrane region" description="Helical" evidence="1">
    <location>
        <begin position="59"/>
        <end position="81"/>
    </location>
</feature>
<feature type="transmembrane region" description="Helical" evidence="1">
    <location>
        <begin position="88"/>
        <end position="107"/>
    </location>
</feature>
<feature type="transmembrane region" description="Helical" evidence="1">
    <location>
        <begin position="111"/>
        <end position="133"/>
    </location>
</feature>
<feature type="transmembrane region" description="Helical" evidence="1">
    <location>
        <begin position="146"/>
        <end position="168"/>
    </location>
</feature>
<feature type="transmembrane region" description="Helical" evidence="1">
    <location>
        <begin position="188"/>
        <end position="205"/>
    </location>
</feature>
<feature type="transmembrane region" description="Helical" evidence="1">
    <location>
        <begin position="242"/>
        <end position="264"/>
    </location>
</feature>
<feature type="transmembrane region" description="Helical" evidence="1">
    <location>
        <begin position="274"/>
        <end position="296"/>
    </location>
</feature>
<feature type="transmembrane region" description="Helical" evidence="1">
    <location>
        <begin position="303"/>
        <end position="322"/>
    </location>
</feature>
<reference key="1">
    <citation type="journal article" date="2004" name="Nat. Genet.">
        <title>Comparison of genome degradation in Paratyphi A and Typhi, human-restricted serovars of Salmonella enterica that cause typhoid.</title>
        <authorList>
            <person name="McClelland M."/>
            <person name="Sanderson K.E."/>
            <person name="Clifton S.W."/>
            <person name="Latreille P."/>
            <person name="Porwollik S."/>
            <person name="Sabo A."/>
            <person name="Meyer R."/>
            <person name="Bieri T."/>
            <person name="Ozersky P."/>
            <person name="McLellan M."/>
            <person name="Harkins C.R."/>
            <person name="Wang C."/>
            <person name="Nguyen C."/>
            <person name="Berghoff A."/>
            <person name="Elliott G."/>
            <person name="Kohlberg S."/>
            <person name="Strong C."/>
            <person name="Du F."/>
            <person name="Carter J."/>
            <person name="Kremizki C."/>
            <person name="Layman D."/>
            <person name="Leonard S."/>
            <person name="Sun H."/>
            <person name="Fulton L."/>
            <person name="Nash W."/>
            <person name="Miner T."/>
            <person name="Minx P."/>
            <person name="Delehaunty K."/>
            <person name="Fronick C."/>
            <person name="Magrini V."/>
            <person name="Nhan M."/>
            <person name="Warren W."/>
            <person name="Florea L."/>
            <person name="Spieth J."/>
            <person name="Wilson R.K."/>
        </authorList>
    </citation>
    <scope>NUCLEOTIDE SEQUENCE [LARGE SCALE GENOMIC DNA]</scope>
    <source>
        <strain>ATCC 9150 / SARB42</strain>
    </source>
</reference>
<accession>Q5PH87</accession>
<proteinExistence type="inferred from homology"/>
<sequence length="326" mass="34858">MLTFARQQQRRNVRWLLSLSLLVLLATLLSLCAGEQWIAPGDWLSARGELFVWQIRLPRTLAVLLVGAALALSGAVMQALFENPLAEPGLLGVSNGAGVGLIAAVLLGQGQLAGWALGLCAIAGALIITLILLRFARRHLSTSRLLLAGVALGIICSALMTWAIYFSTSFDLRQLMYWMMGGFGGVDWQQSWLMIALIPVLIWICCQSQPLNMLALGETSARQLGLPLWFWRNLLVVATGWMVGVSVAMAGAIGFIGLVIPHILRLCGLTDHRVLLPGCALAGAIALLLADVVARLALASAELPIGVVTATLGAPVFIWLLLKSAR</sequence>